<reference key="1">
    <citation type="journal article" date="2009" name="BMC Microbiol.">
        <title>The genome sequence of Geobacter metallireducens: features of metabolism, physiology and regulation common and dissimilar to Geobacter sulfurreducens.</title>
        <authorList>
            <person name="Aklujkar M."/>
            <person name="Krushkal J."/>
            <person name="DiBartolo G."/>
            <person name="Lapidus A."/>
            <person name="Land M.L."/>
            <person name="Lovley D.R."/>
        </authorList>
    </citation>
    <scope>NUCLEOTIDE SEQUENCE [LARGE SCALE GENOMIC DNA]</scope>
    <source>
        <strain>ATCC 53774 / DSM 7210 / GS-15</strain>
    </source>
</reference>
<feature type="chain" id="PRO_1000046025" description="Ribosomal protein L11 methyltransferase">
    <location>
        <begin position="1"/>
        <end position="299"/>
    </location>
</feature>
<feature type="binding site" evidence="1">
    <location>
        <position position="152"/>
    </location>
    <ligand>
        <name>S-adenosyl-L-methionine</name>
        <dbReference type="ChEBI" id="CHEBI:59789"/>
    </ligand>
</feature>
<feature type="binding site" evidence="1">
    <location>
        <position position="172"/>
    </location>
    <ligand>
        <name>S-adenosyl-L-methionine</name>
        <dbReference type="ChEBI" id="CHEBI:59789"/>
    </ligand>
</feature>
<feature type="binding site" evidence="1">
    <location>
        <position position="194"/>
    </location>
    <ligand>
        <name>S-adenosyl-L-methionine</name>
        <dbReference type="ChEBI" id="CHEBI:59789"/>
    </ligand>
</feature>
<feature type="binding site" evidence="1">
    <location>
        <position position="234"/>
    </location>
    <ligand>
        <name>S-adenosyl-L-methionine</name>
        <dbReference type="ChEBI" id="CHEBI:59789"/>
    </ligand>
</feature>
<dbReference type="EC" id="2.1.1.-" evidence="1"/>
<dbReference type="EMBL" id="CP000148">
    <property type="protein sequence ID" value="ABB33598.1"/>
    <property type="molecule type" value="Genomic_DNA"/>
</dbReference>
<dbReference type="RefSeq" id="WP_004512612.1">
    <property type="nucleotide sequence ID" value="NC_007517.1"/>
</dbReference>
<dbReference type="SMR" id="Q39Q76"/>
<dbReference type="STRING" id="269799.Gmet_3386"/>
<dbReference type="DNASU" id="3740701"/>
<dbReference type="KEGG" id="gme:Gmet_3386"/>
<dbReference type="eggNOG" id="COG2264">
    <property type="taxonomic scope" value="Bacteria"/>
</dbReference>
<dbReference type="HOGENOM" id="CLU_049382_0_1_7"/>
<dbReference type="Proteomes" id="UP000007073">
    <property type="component" value="Chromosome"/>
</dbReference>
<dbReference type="GO" id="GO:0005737">
    <property type="term" value="C:cytoplasm"/>
    <property type="evidence" value="ECO:0007669"/>
    <property type="project" value="UniProtKB-SubCell"/>
</dbReference>
<dbReference type="GO" id="GO:0016279">
    <property type="term" value="F:protein-lysine N-methyltransferase activity"/>
    <property type="evidence" value="ECO:0007669"/>
    <property type="project" value="RHEA"/>
</dbReference>
<dbReference type="GO" id="GO:0032259">
    <property type="term" value="P:methylation"/>
    <property type="evidence" value="ECO:0007669"/>
    <property type="project" value="UniProtKB-KW"/>
</dbReference>
<dbReference type="CDD" id="cd02440">
    <property type="entry name" value="AdoMet_MTases"/>
    <property type="match status" value="1"/>
</dbReference>
<dbReference type="Gene3D" id="3.40.50.150">
    <property type="entry name" value="Vaccinia Virus protein VP39"/>
    <property type="match status" value="1"/>
</dbReference>
<dbReference type="HAMAP" id="MF_00735">
    <property type="entry name" value="Methyltr_PrmA"/>
    <property type="match status" value="1"/>
</dbReference>
<dbReference type="InterPro" id="IPR050078">
    <property type="entry name" value="Ribosomal_L11_MeTrfase_PrmA"/>
</dbReference>
<dbReference type="InterPro" id="IPR004498">
    <property type="entry name" value="Ribosomal_PrmA_MeTrfase"/>
</dbReference>
<dbReference type="InterPro" id="IPR029063">
    <property type="entry name" value="SAM-dependent_MTases_sf"/>
</dbReference>
<dbReference type="NCBIfam" id="TIGR00406">
    <property type="entry name" value="prmA"/>
    <property type="match status" value="1"/>
</dbReference>
<dbReference type="PANTHER" id="PTHR43648">
    <property type="entry name" value="ELECTRON TRANSFER FLAVOPROTEIN BETA SUBUNIT LYSINE METHYLTRANSFERASE"/>
    <property type="match status" value="1"/>
</dbReference>
<dbReference type="PANTHER" id="PTHR43648:SF1">
    <property type="entry name" value="ELECTRON TRANSFER FLAVOPROTEIN BETA SUBUNIT LYSINE METHYLTRANSFERASE"/>
    <property type="match status" value="1"/>
</dbReference>
<dbReference type="Pfam" id="PF06325">
    <property type="entry name" value="PrmA"/>
    <property type="match status" value="1"/>
</dbReference>
<dbReference type="PIRSF" id="PIRSF000401">
    <property type="entry name" value="RPL11_MTase"/>
    <property type="match status" value="1"/>
</dbReference>
<dbReference type="SUPFAM" id="SSF53335">
    <property type="entry name" value="S-adenosyl-L-methionine-dependent methyltransferases"/>
    <property type="match status" value="1"/>
</dbReference>
<protein>
    <recommendedName>
        <fullName evidence="1">Ribosomal protein L11 methyltransferase</fullName>
        <shortName evidence="1">L11 Mtase</shortName>
        <ecNumber evidence="1">2.1.1.-</ecNumber>
    </recommendedName>
</protein>
<accession>Q39Q76</accession>
<sequence>MDKTWAEVTCEIPAAMIDLLADFLVELSGNGVSIDNLELDTFSLDTMDEAPVKTVRAYFTPDDELEEKLAALNRFIQEHAPAYGDAAPAPPTVTTLREEDWATGWRQHFAPTRIGRKLVIKPTWEPFSPEPGDLVIELDPGMAFGTGTHPTTRLCLEALEKLGTAGDVLDVGTGSGILAMAAVKLGAQRVVGTDIDPDAVAVARENCAMNGVTAELVTTPLADIPGQFSVVLANILAEDLVRMAADLTAKVAPGGFLILSGILVERESYVIDGFVSTGLTLAETTREGEWSCLLYQAGQ</sequence>
<keyword id="KW-0963">Cytoplasm</keyword>
<keyword id="KW-0489">Methyltransferase</keyword>
<keyword id="KW-1185">Reference proteome</keyword>
<keyword id="KW-0949">S-adenosyl-L-methionine</keyword>
<keyword id="KW-0808">Transferase</keyword>
<evidence type="ECO:0000255" key="1">
    <source>
        <dbReference type="HAMAP-Rule" id="MF_00735"/>
    </source>
</evidence>
<organism>
    <name type="scientific">Geobacter metallireducens (strain ATCC 53774 / DSM 7210 / GS-15)</name>
    <dbReference type="NCBI Taxonomy" id="269799"/>
    <lineage>
        <taxon>Bacteria</taxon>
        <taxon>Pseudomonadati</taxon>
        <taxon>Thermodesulfobacteriota</taxon>
        <taxon>Desulfuromonadia</taxon>
        <taxon>Geobacterales</taxon>
        <taxon>Geobacteraceae</taxon>
        <taxon>Geobacter</taxon>
    </lineage>
</organism>
<proteinExistence type="inferred from homology"/>
<gene>
    <name evidence="1" type="primary">prmA</name>
    <name type="ordered locus">Gmet_3386</name>
</gene>
<name>PRMA_GEOMG</name>
<comment type="function">
    <text evidence="1">Methylates ribosomal protein L11.</text>
</comment>
<comment type="catalytic activity">
    <reaction evidence="1">
        <text>L-lysyl-[protein] + 3 S-adenosyl-L-methionine = N(6),N(6),N(6)-trimethyl-L-lysyl-[protein] + 3 S-adenosyl-L-homocysteine + 3 H(+)</text>
        <dbReference type="Rhea" id="RHEA:54192"/>
        <dbReference type="Rhea" id="RHEA-COMP:9752"/>
        <dbReference type="Rhea" id="RHEA-COMP:13826"/>
        <dbReference type="ChEBI" id="CHEBI:15378"/>
        <dbReference type="ChEBI" id="CHEBI:29969"/>
        <dbReference type="ChEBI" id="CHEBI:57856"/>
        <dbReference type="ChEBI" id="CHEBI:59789"/>
        <dbReference type="ChEBI" id="CHEBI:61961"/>
    </reaction>
</comment>
<comment type="subcellular location">
    <subcellularLocation>
        <location evidence="1">Cytoplasm</location>
    </subcellularLocation>
</comment>
<comment type="similarity">
    <text evidence="1">Belongs to the methyltransferase superfamily. PrmA family.</text>
</comment>